<dbReference type="EMBL" id="L42023">
    <property type="protein sequence ID" value="AAC21914.1"/>
    <property type="molecule type" value="Genomic_DNA"/>
</dbReference>
<dbReference type="PIR" id="H64004">
    <property type="entry name" value="H64004"/>
</dbReference>
<dbReference type="RefSeq" id="NP_438416.1">
    <property type="nucleotide sequence ID" value="NC_000907.1"/>
</dbReference>
<dbReference type="SMR" id="P43972"/>
<dbReference type="STRING" id="71421.HI_0246"/>
<dbReference type="EnsemblBacteria" id="AAC21914">
    <property type="protein sequence ID" value="AAC21914"/>
    <property type="gene ID" value="HI_0246"/>
</dbReference>
<dbReference type="KEGG" id="hin:HI_0246"/>
<dbReference type="PATRIC" id="fig|71421.8.peg.261"/>
<dbReference type="eggNOG" id="COG0641">
    <property type="taxonomic scope" value="Bacteria"/>
</dbReference>
<dbReference type="HOGENOM" id="CLU_130253_0_0_6"/>
<dbReference type="OrthoDB" id="5677666at2"/>
<dbReference type="BioCyc" id="HINF71421:G1GJ1-261-MONOMER"/>
<dbReference type="Proteomes" id="UP000000579">
    <property type="component" value="Chromosome"/>
</dbReference>
<dbReference type="InterPro" id="IPR016777">
    <property type="entry name" value="UCP020772"/>
</dbReference>
<dbReference type="PIRSF" id="PIRSF020772">
    <property type="entry name" value="UCP020772"/>
    <property type="match status" value="1"/>
</dbReference>
<dbReference type="PROSITE" id="PS51257">
    <property type="entry name" value="PROKAR_LIPOPROTEIN"/>
    <property type="match status" value="1"/>
</dbReference>
<sequence>MNLTKLLPAFAAAVVLSACAKDAPEMTKSSAQIAEMQTLPTITDKTVVYSCNKQTVTAVYQFENQEPVAAMVSVGDGIIAKDFTRDKSQNDFTSFVSGDYVWNVDSGLTLDKFDSVVPVNLIQKGKSSDNIIVKNCDVNVKATKKANL</sequence>
<keyword id="KW-0903">Direct protein sequencing</keyword>
<keyword id="KW-1185">Reference proteome</keyword>
<keyword id="KW-0732">Signal</keyword>
<organism>
    <name type="scientific">Haemophilus influenzae (strain ATCC 51907 / DSM 11121 / KW20 / Rd)</name>
    <dbReference type="NCBI Taxonomy" id="71421"/>
    <lineage>
        <taxon>Bacteria</taxon>
        <taxon>Pseudomonadati</taxon>
        <taxon>Pseudomonadota</taxon>
        <taxon>Gammaproteobacteria</taxon>
        <taxon>Pasteurellales</taxon>
        <taxon>Pasteurellaceae</taxon>
        <taxon>Haemophilus</taxon>
    </lineage>
</organism>
<accession>P43972</accession>
<evidence type="ECO:0000269" key="1">
    <source>
    </source>
</evidence>
<gene>
    <name type="ordered locus">HI_0246</name>
</gene>
<protein>
    <recommendedName>
        <fullName>Uncharacterized protein HI_0246</fullName>
    </recommendedName>
</protein>
<feature type="signal peptide" evidence="1">
    <location>
        <begin position="1"/>
        <end position="20"/>
    </location>
</feature>
<feature type="chain" id="PRO_0000013955" description="Uncharacterized protein HI_0246">
    <location>
        <begin position="21"/>
        <end position="148"/>
    </location>
</feature>
<proteinExistence type="evidence at protein level"/>
<name>Y246_HAEIN</name>
<reference key="1">
    <citation type="journal article" date="1995" name="Science">
        <title>Whole-genome random sequencing and assembly of Haemophilus influenzae Rd.</title>
        <authorList>
            <person name="Fleischmann R.D."/>
            <person name="Adams M.D."/>
            <person name="White O."/>
            <person name="Clayton R.A."/>
            <person name="Kirkness E.F."/>
            <person name="Kerlavage A.R."/>
            <person name="Bult C.J."/>
            <person name="Tomb J.-F."/>
            <person name="Dougherty B.A."/>
            <person name="Merrick J.M."/>
            <person name="McKenney K."/>
            <person name="Sutton G.G."/>
            <person name="FitzHugh W."/>
            <person name="Fields C.A."/>
            <person name="Gocayne J.D."/>
            <person name="Scott J.D."/>
            <person name="Shirley R."/>
            <person name="Liu L.-I."/>
            <person name="Glodek A."/>
            <person name="Kelley J.M."/>
            <person name="Weidman J.F."/>
            <person name="Phillips C.A."/>
            <person name="Spriggs T."/>
            <person name="Hedblom E."/>
            <person name="Cotton M.D."/>
            <person name="Utterback T.R."/>
            <person name="Hanna M.C."/>
            <person name="Nguyen D.T."/>
            <person name="Saudek D.M."/>
            <person name="Brandon R.C."/>
            <person name="Fine L.D."/>
            <person name="Fritchman J.L."/>
            <person name="Fuhrmann J.L."/>
            <person name="Geoghagen N.S.M."/>
            <person name="Gnehm C.L."/>
            <person name="McDonald L.A."/>
            <person name="Small K.V."/>
            <person name="Fraser C.M."/>
            <person name="Smith H.O."/>
            <person name="Venter J.C."/>
        </authorList>
    </citation>
    <scope>NUCLEOTIDE SEQUENCE [LARGE SCALE GENOMIC DNA]</scope>
    <source>
        <strain>ATCC 51907 / DSM 11121 / KW20 / Rd</strain>
    </source>
</reference>
<reference key="2">
    <citation type="journal article" date="2000" name="Electrophoresis">
        <title>Two-dimensional map of the proteome of Haemophilus influenzae.</title>
        <authorList>
            <person name="Langen H."/>
            <person name="Takacs B."/>
            <person name="Evers S."/>
            <person name="Berndt P."/>
            <person name="Lahm H.W."/>
            <person name="Wipf B."/>
            <person name="Gray C."/>
            <person name="Fountoulakis M."/>
        </authorList>
    </citation>
    <scope>PROTEIN SEQUENCE OF 21-29</scope>
    <scope>IDENTIFICATION BY MASS SPECTROMETRY</scope>
    <source>
        <strain>ATCC 51907 / DSM 11121 / KW20 / Rd</strain>
    </source>
</reference>